<gene>
    <name evidence="1" type="primary">rpmJ1</name>
    <name type="ordered locus">Ping_2610</name>
</gene>
<gene>
    <name evidence="1" type="primary">rpmJ2</name>
    <name type="ordered locus">Ping_3503</name>
</gene>
<comment type="similarity">
    <text evidence="1">Belongs to the bacterial ribosomal protein bL36 family.</text>
</comment>
<accession>A1SXW4</accession>
<dbReference type="EMBL" id="CP000510">
    <property type="protein sequence ID" value="ABM04329.1"/>
    <property type="molecule type" value="Genomic_DNA"/>
</dbReference>
<dbReference type="EMBL" id="CP000510">
    <property type="protein sequence ID" value="ABM05186.1"/>
    <property type="molecule type" value="Genomic_DNA"/>
</dbReference>
<dbReference type="SMR" id="A1SXW4"/>
<dbReference type="STRING" id="357804.Ping_2610"/>
<dbReference type="KEGG" id="pin:Ping_2610"/>
<dbReference type="KEGG" id="pin:Ping_3503"/>
<dbReference type="eggNOG" id="COG0257">
    <property type="taxonomic scope" value="Bacteria"/>
</dbReference>
<dbReference type="HOGENOM" id="CLU_135723_6_2_6"/>
<dbReference type="OrthoDB" id="9802520at2"/>
<dbReference type="Proteomes" id="UP000000639">
    <property type="component" value="Chromosome"/>
</dbReference>
<dbReference type="GO" id="GO:0005737">
    <property type="term" value="C:cytoplasm"/>
    <property type="evidence" value="ECO:0007669"/>
    <property type="project" value="UniProtKB-ARBA"/>
</dbReference>
<dbReference type="GO" id="GO:1990904">
    <property type="term" value="C:ribonucleoprotein complex"/>
    <property type="evidence" value="ECO:0007669"/>
    <property type="project" value="UniProtKB-KW"/>
</dbReference>
<dbReference type="GO" id="GO:0005840">
    <property type="term" value="C:ribosome"/>
    <property type="evidence" value="ECO:0007669"/>
    <property type="project" value="UniProtKB-KW"/>
</dbReference>
<dbReference type="GO" id="GO:0003735">
    <property type="term" value="F:structural constituent of ribosome"/>
    <property type="evidence" value="ECO:0007669"/>
    <property type="project" value="InterPro"/>
</dbReference>
<dbReference type="GO" id="GO:0006412">
    <property type="term" value="P:translation"/>
    <property type="evidence" value="ECO:0007669"/>
    <property type="project" value="UniProtKB-UniRule"/>
</dbReference>
<dbReference type="HAMAP" id="MF_00251">
    <property type="entry name" value="Ribosomal_bL36"/>
    <property type="match status" value="1"/>
</dbReference>
<dbReference type="InterPro" id="IPR000473">
    <property type="entry name" value="Ribosomal_bL36"/>
</dbReference>
<dbReference type="InterPro" id="IPR035977">
    <property type="entry name" value="Ribosomal_bL36_sp"/>
</dbReference>
<dbReference type="NCBIfam" id="TIGR01022">
    <property type="entry name" value="rpmJ_bact"/>
    <property type="match status" value="1"/>
</dbReference>
<dbReference type="PANTHER" id="PTHR42888">
    <property type="entry name" value="50S RIBOSOMAL PROTEIN L36, CHLOROPLASTIC"/>
    <property type="match status" value="1"/>
</dbReference>
<dbReference type="PANTHER" id="PTHR42888:SF1">
    <property type="entry name" value="LARGE RIBOSOMAL SUBUNIT PROTEIN BL36C"/>
    <property type="match status" value="1"/>
</dbReference>
<dbReference type="Pfam" id="PF00444">
    <property type="entry name" value="Ribosomal_L36"/>
    <property type="match status" value="1"/>
</dbReference>
<dbReference type="SUPFAM" id="SSF57840">
    <property type="entry name" value="Ribosomal protein L36"/>
    <property type="match status" value="1"/>
</dbReference>
<dbReference type="PROSITE" id="PS00828">
    <property type="entry name" value="RIBOSOMAL_L36"/>
    <property type="match status" value="1"/>
</dbReference>
<feature type="chain" id="PRO_0000344708" description="Large ribosomal subunit protein bL36">
    <location>
        <begin position="1"/>
        <end position="37"/>
    </location>
</feature>
<protein>
    <recommendedName>
        <fullName evidence="1">Large ribosomal subunit protein bL36</fullName>
    </recommendedName>
    <alternativeName>
        <fullName evidence="2">50S ribosomal protein L36</fullName>
    </alternativeName>
</protein>
<name>RL36_PSYIN</name>
<evidence type="ECO:0000255" key="1">
    <source>
        <dbReference type="HAMAP-Rule" id="MF_00251"/>
    </source>
</evidence>
<evidence type="ECO:0000305" key="2"/>
<organism>
    <name type="scientific">Psychromonas ingrahamii (strain DSM 17664 / CCUG 51855 / 37)</name>
    <dbReference type="NCBI Taxonomy" id="357804"/>
    <lineage>
        <taxon>Bacteria</taxon>
        <taxon>Pseudomonadati</taxon>
        <taxon>Pseudomonadota</taxon>
        <taxon>Gammaproteobacteria</taxon>
        <taxon>Alteromonadales</taxon>
        <taxon>Psychromonadaceae</taxon>
        <taxon>Psychromonas</taxon>
    </lineage>
</organism>
<reference key="1">
    <citation type="journal article" date="2008" name="BMC Genomics">
        <title>Genomics of an extreme psychrophile, Psychromonas ingrahamii.</title>
        <authorList>
            <person name="Riley M."/>
            <person name="Staley J.T."/>
            <person name="Danchin A."/>
            <person name="Wang T.Z."/>
            <person name="Brettin T.S."/>
            <person name="Hauser L.J."/>
            <person name="Land M.L."/>
            <person name="Thompson L.S."/>
        </authorList>
    </citation>
    <scope>NUCLEOTIDE SEQUENCE [LARGE SCALE GENOMIC DNA]</scope>
    <source>
        <strain>DSM 17664 / CCUG 51855 / 37</strain>
    </source>
</reference>
<keyword id="KW-1185">Reference proteome</keyword>
<keyword id="KW-0687">Ribonucleoprotein</keyword>
<keyword id="KW-0689">Ribosomal protein</keyword>
<sequence>MKVRASVKKICRNCKVIKRHGVVRVICVEPKHKQRQG</sequence>
<proteinExistence type="inferred from homology"/>